<accession>G7IHF9</accession>
<dbReference type="EMBL" id="CM001218">
    <property type="protein sequence ID" value="AES67097.1"/>
    <property type="molecule type" value="Genomic_DNA"/>
</dbReference>
<dbReference type="RefSeq" id="XP_003596846.1">
    <property type="nucleotide sequence ID" value="XM_003596798.2"/>
</dbReference>
<dbReference type="STRING" id="3880.G7IHF9"/>
<dbReference type="PaxDb" id="3880-AES67097"/>
<dbReference type="EnsemblPlants" id="rna11692">
    <property type="protein sequence ID" value="RHN75476.1"/>
    <property type="gene ID" value="gene11692"/>
</dbReference>
<dbReference type="Gramene" id="rna11692">
    <property type="protein sequence ID" value="RHN75476.1"/>
    <property type="gene ID" value="gene11692"/>
</dbReference>
<dbReference type="KEGG" id="mtr:11412229"/>
<dbReference type="eggNOG" id="ENOG502RXQU">
    <property type="taxonomic scope" value="Eukaryota"/>
</dbReference>
<dbReference type="HOGENOM" id="CLU_066104_3_1_1"/>
<dbReference type="OMA" id="FHAQYND"/>
<dbReference type="OrthoDB" id="753675at2759"/>
<dbReference type="Proteomes" id="UP000002051">
    <property type="component" value="Chromosome 2"/>
</dbReference>
<dbReference type="ExpressionAtlas" id="G7IHF9">
    <property type="expression patterns" value="differential"/>
</dbReference>
<dbReference type="GO" id="GO:0048226">
    <property type="term" value="C:Casparian strip"/>
    <property type="evidence" value="ECO:0000318"/>
    <property type="project" value="GO_Central"/>
</dbReference>
<dbReference type="GO" id="GO:0005886">
    <property type="term" value="C:plasma membrane"/>
    <property type="evidence" value="ECO:0000318"/>
    <property type="project" value="GO_Central"/>
</dbReference>
<dbReference type="GO" id="GO:0042803">
    <property type="term" value="F:protein homodimerization activity"/>
    <property type="evidence" value="ECO:0007669"/>
    <property type="project" value="EnsemblPlants"/>
</dbReference>
<dbReference type="GO" id="GO:0042545">
    <property type="term" value="P:cell wall modification"/>
    <property type="evidence" value="ECO:0000318"/>
    <property type="project" value="GO_Central"/>
</dbReference>
<dbReference type="GO" id="GO:0007043">
    <property type="term" value="P:cell-cell junction assembly"/>
    <property type="evidence" value="ECO:0000318"/>
    <property type="project" value="GO_Central"/>
</dbReference>
<dbReference type="InterPro" id="IPR006459">
    <property type="entry name" value="CASP/CASPL"/>
</dbReference>
<dbReference type="InterPro" id="IPR006702">
    <property type="entry name" value="CASP_dom"/>
</dbReference>
<dbReference type="InterPro" id="IPR044173">
    <property type="entry name" value="CASPL"/>
</dbReference>
<dbReference type="NCBIfam" id="TIGR01569">
    <property type="entry name" value="A_tha_TIGR01569"/>
    <property type="match status" value="1"/>
</dbReference>
<dbReference type="PANTHER" id="PTHR36488:SF11">
    <property type="entry name" value="CASP-LIKE PROTEIN"/>
    <property type="match status" value="1"/>
</dbReference>
<dbReference type="PANTHER" id="PTHR36488">
    <property type="entry name" value="CASP-LIKE PROTEIN 1U1"/>
    <property type="match status" value="1"/>
</dbReference>
<dbReference type="Pfam" id="PF04535">
    <property type="entry name" value="CASP_dom"/>
    <property type="match status" value="1"/>
</dbReference>
<protein>
    <recommendedName>
        <fullName>Casparian strip membrane protein 4</fullName>
        <shortName>MtCASP4</shortName>
    </recommendedName>
</protein>
<keyword id="KW-1003">Cell membrane</keyword>
<keyword id="KW-0961">Cell wall biogenesis/degradation</keyword>
<keyword id="KW-0325">Glycoprotein</keyword>
<keyword id="KW-0472">Membrane</keyword>
<keyword id="KW-1185">Reference proteome</keyword>
<keyword id="KW-0812">Transmembrane</keyword>
<keyword id="KW-1133">Transmembrane helix</keyword>
<comment type="function">
    <text evidence="1">Regulates membrane-cell wall junctions and localized cell wall deposition. Required for establishment of the Casparian strip membrane domain (CSD) and the subsequent formation of Casparian strips, a cell wall modification of the root endodermis that determines an apoplastic barrier between the intraorganismal apoplasm and the extraorganismal apoplasm and prevents lateral diffusion (By similarity).</text>
</comment>
<comment type="subunit">
    <text evidence="1">Homodimer and heterodimers.</text>
</comment>
<comment type="subcellular location">
    <subcellularLocation>
        <location evidence="1">Cell membrane</location>
        <topology evidence="1">Multi-pass membrane protein</topology>
    </subcellularLocation>
    <text evidence="1">Very restricted localization following a belt shape within the plasma membrane which coincides with the position of the Casparian strip membrane domain in the root endodermis.</text>
</comment>
<comment type="similarity">
    <text evidence="4">Belongs to the Casparian strip membrane proteins (CASP) family.</text>
</comment>
<organism>
    <name type="scientific">Medicago truncatula</name>
    <name type="common">Barrel medic</name>
    <name type="synonym">Medicago tribuloides</name>
    <dbReference type="NCBI Taxonomy" id="3880"/>
    <lineage>
        <taxon>Eukaryota</taxon>
        <taxon>Viridiplantae</taxon>
        <taxon>Streptophyta</taxon>
        <taxon>Embryophyta</taxon>
        <taxon>Tracheophyta</taxon>
        <taxon>Spermatophyta</taxon>
        <taxon>Magnoliopsida</taxon>
        <taxon>eudicotyledons</taxon>
        <taxon>Gunneridae</taxon>
        <taxon>Pentapetalae</taxon>
        <taxon>rosids</taxon>
        <taxon>fabids</taxon>
        <taxon>Fabales</taxon>
        <taxon>Fabaceae</taxon>
        <taxon>Papilionoideae</taxon>
        <taxon>50 kb inversion clade</taxon>
        <taxon>NPAAA clade</taxon>
        <taxon>Hologalegina</taxon>
        <taxon>IRL clade</taxon>
        <taxon>Trifolieae</taxon>
        <taxon>Medicago</taxon>
    </lineage>
</organism>
<sequence>MDSRREVEESSTAPILESKRTRSNGKGKSIDGDHSPPHAATVVTTKATPLQKGGMKKGIAILDFILRLGAIGAALGAAVIMGTNEQILPFFTQFLQFHAQWDDFPMFKFFVVANGAAAGFLILSLPFSIVCIVRPLAAGPRFLLVIVDLVLMALVVAAASSAAAVVYLAHNGSQDANWNAICQQFTDFCQGSSLAVVASFVASVFLACLVVVSSVALKRT</sequence>
<feature type="chain" id="PRO_0000417779" description="Casparian strip membrane protein 4">
    <location>
        <begin position="1"/>
        <end position="220"/>
    </location>
</feature>
<feature type="topological domain" description="Cytoplasmic" evidence="2">
    <location>
        <begin position="1"/>
        <end position="60"/>
    </location>
</feature>
<feature type="transmembrane region" description="Helical" evidence="2">
    <location>
        <begin position="61"/>
        <end position="81"/>
    </location>
</feature>
<feature type="topological domain" description="Extracellular" evidence="2">
    <location>
        <begin position="82"/>
        <end position="108"/>
    </location>
</feature>
<feature type="transmembrane region" description="Helical" evidence="2">
    <location>
        <begin position="109"/>
        <end position="129"/>
    </location>
</feature>
<feature type="topological domain" description="Cytoplasmic" evidence="2">
    <location>
        <begin position="130"/>
        <end position="141"/>
    </location>
</feature>
<feature type="transmembrane region" description="Helical" evidence="2">
    <location>
        <begin position="142"/>
        <end position="162"/>
    </location>
</feature>
<feature type="topological domain" description="Extracellular" evidence="2">
    <location>
        <begin position="163"/>
        <end position="194"/>
    </location>
</feature>
<feature type="transmembrane region" description="Helical" evidence="2">
    <location>
        <begin position="195"/>
        <end position="215"/>
    </location>
</feature>
<feature type="topological domain" description="Cytoplasmic" evidence="2">
    <location>
        <begin position="216"/>
        <end position="220"/>
    </location>
</feature>
<feature type="region of interest" description="Disordered" evidence="3">
    <location>
        <begin position="1"/>
        <end position="39"/>
    </location>
</feature>
<feature type="glycosylation site" description="N-linked (GlcNAc...) asparagine" evidence="2">
    <location>
        <position position="171"/>
    </location>
</feature>
<reference key="1">
    <citation type="journal article" date="2011" name="Nature">
        <title>The Medicago genome provides insight into the evolution of rhizobial symbioses.</title>
        <authorList>
            <person name="Young N.D."/>
            <person name="Debelle F."/>
            <person name="Oldroyd G.E.D."/>
            <person name="Geurts R."/>
            <person name="Cannon S.B."/>
            <person name="Udvardi M.K."/>
            <person name="Benedito V.A."/>
            <person name="Mayer K.F.X."/>
            <person name="Gouzy J."/>
            <person name="Schoof H."/>
            <person name="Van de Peer Y."/>
            <person name="Proost S."/>
            <person name="Cook D.R."/>
            <person name="Meyers B.C."/>
            <person name="Spannagl M."/>
            <person name="Cheung F."/>
            <person name="De Mita S."/>
            <person name="Krishnakumar V."/>
            <person name="Gundlach H."/>
            <person name="Zhou S."/>
            <person name="Mudge J."/>
            <person name="Bharti A.K."/>
            <person name="Murray J.D."/>
            <person name="Naoumkina M.A."/>
            <person name="Rosen B."/>
            <person name="Silverstein K.A.T."/>
            <person name="Tang H."/>
            <person name="Rombauts S."/>
            <person name="Zhao P.X."/>
            <person name="Zhou P."/>
            <person name="Barbe V."/>
            <person name="Bardou P."/>
            <person name="Bechner M."/>
            <person name="Bellec A."/>
            <person name="Berger A."/>
            <person name="Berges H."/>
            <person name="Bidwell S."/>
            <person name="Bisseling T."/>
            <person name="Choisne N."/>
            <person name="Couloux A."/>
            <person name="Denny R."/>
            <person name="Deshpande S."/>
            <person name="Dai X."/>
            <person name="Doyle J.J."/>
            <person name="Dudez A.-M."/>
            <person name="Farmer A.D."/>
            <person name="Fouteau S."/>
            <person name="Franken C."/>
            <person name="Gibelin C."/>
            <person name="Gish J."/>
            <person name="Goldstein S."/>
            <person name="Gonzalez A.J."/>
            <person name="Green P.J."/>
            <person name="Hallab A."/>
            <person name="Hartog M."/>
            <person name="Hua A."/>
            <person name="Humphray S.J."/>
            <person name="Jeong D.-H."/>
            <person name="Jing Y."/>
            <person name="Jocker A."/>
            <person name="Kenton S.M."/>
            <person name="Kim D.-J."/>
            <person name="Klee K."/>
            <person name="Lai H."/>
            <person name="Lang C."/>
            <person name="Lin S."/>
            <person name="Macmil S.L."/>
            <person name="Magdelenat G."/>
            <person name="Matthews L."/>
            <person name="McCorrison J."/>
            <person name="Monaghan E.L."/>
            <person name="Mun J.-H."/>
            <person name="Najar F.Z."/>
            <person name="Nicholson C."/>
            <person name="Noirot C."/>
            <person name="O'Bleness M."/>
            <person name="Paule C.R."/>
            <person name="Poulain J."/>
            <person name="Prion F."/>
            <person name="Qin B."/>
            <person name="Qu C."/>
            <person name="Retzel E.F."/>
            <person name="Riddle C."/>
            <person name="Sallet E."/>
            <person name="Samain S."/>
            <person name="Samson N."/>
            <person name="Sanders I."/>
            <person name="Saurat O."/>
            <person name="Scarpelli C."/>
            <person name="Schiex T."/>
            <person name="Segurens B."/>
            <person name="Severin A.J."/>
            <person name="Sherrier D.J."/>
            <person name="Shi R."/>
            <person name="Sims S."/>
            <person name="Singer S.R."/>
            <person name="Sinharoy S."/>
            <person name="Sterck L."/>
            <person name="Viollet A."/>
            <person name="Wang B.-B."/>
            <person name="Wang K."/>
            <person name="Wang M."/>
            <person name="Wang X."/>
            <person name="Warfsmann J."/>
            <person name="Weissenbach J."/>
            <person name="White D.D."/>
            <person name="White J.D."/>
            <person name="Wiley G.B."/>
            <person name="Wincker P."/>
            <person name="Xing Y."/>
            <person name="Yang L."/>
            <person name="Yao Z."/>
            <person name="Ying F."/>
            <person name="Zhai J."/>
            <person name="Zhou L."/>
            <person name="Zuber A."/>
            <person name="Denarie J."/>
            <person name="Dixon R.A."/>
            <person name="May G.D."/>
            <person name="Schwartz D.C."/>
            <person name="Rogers J."/>
            <person name="Quetier F."/>
            <person name="Town C.D."/>
            <person name="Roe B.A."/>
        </authorList>
    </citation>
    <scope>NUCLEOTIDE SEQUENCE [LARGE SCALE GENOMIC DNA]</scope>
    <source>
        <strain>cv. Jemalong A17</strain>
    </source>
</reference>
<reference key="2">
    <citation type="journal article" date="2014" name="BMC Genomics">
        <title>An improved genome release (version Mt4.0) for the model legume Medicago truncatula.</title>
        <authorList>
            <person name="Tang H."/>
            <person name="Krishnakumar V."/>
            <person name="Bidwell S."/>
            <person name="Rosen B."/>
            <person name="Chan A."/>
            <person name="Zhou S."/>
            <person name="Gentzbittel L."/>
            <person name="Childs K.L."/>
            <person name="Yandell M."/>
            <person name="Gundlach H."/>
            <person name="Mayer K.F."/>
            <person name="Schwartz D.C."/>
            <person name="Town C.D."/>
        </authorList>
    </citation>
    <scope>GENOME REANNOTATION</scope>
    <source>
        <strain>cv. Jemalong A17</strain>
    </source>
</reference>
<reference key="3">
    <citation type="journal article" date="2014" name="Plant Physiol.">
        <title>Functional and evolutionary analysis of the CASPARIAN STRIP MEMBRANE DOMAIN PROTEIN family.</title>
        <authorList>
            <person name="Roppolo D."/>
            <person name="Boeckmann B."/>
            <person name="Pfister A."/>
            <person name="Boutet E."/>
            <person name="Rubio M.C."/>
            <person name="Denervaud-Tendon V."/>
            <person name="Vermeer J.E."/>
            <person name="Gheyselinck J."/>
            <person name="Xenarios I."/>
            <person name="Geldner N."/>
        </authorList>
    </citation>
    <scope>GENE FAMILY</scope>
    <scope>NOMENCLATURE</scope>
</reference>
<proteinExistence type="inferred from homology"/>
<evidence type="ECO:0000250" key="1"/>
<evidence type="ECO:0000255" key="2"/>
<evidence type="ECO:0000256" key="3">
    <source>
        <dbReference type="SAM" id="MobiDB-lite"/>
    </source>
</evidence>
<evidence type="ECO:0000305" key="4"/>
<gene>
    <name type="ordered locus">MTR_2g086740</name>
</gene>
<name>CASP4_MEDTR</name>